<protein>
    <recommendedName>
        <fullName evidence="1">Aspartate carbamoyltransferase catalytic subunit</fullName>
        <ecNumber evidence="1">2.1.3.2</ecNumber>
    </recommendedName>
    <alternativeName>
        <fullName evidence="1">Aspartate transcarbamylase</fullName>
        <shortName evidence="1">ATCase</shortName>
    </alternativeName>
</protein>
<feature type="chain" id="PRO_0000113112" description="Aspartate carbamoyltransferase catalytic subunit">
    <location>
        <begin position="1"/>
        <end position="343"/>
    </location>
</feature>
<feature type="binding site" evidence="1">
    <location>
        <position position="91"/>
    </location>
    <ligand>
        <name>carbamoyl phosphate</name>
        <dbReference type="ChEBI" id="CHEBI:58228"/>
    </ligand>
</feature>
<feature type="binding site" evidence="1">
    <location>
        <position position="92"/>
    </location>
    <ligand>
        <name>carbamoyl phosphate</name>
        <dbReference type="ChEBI" id="CHEBI:58228"/>
    </ligand>
</feature>
<feature type="binding site" evidence="1">
    <location>
        <position position="119"/>
    </location>
    <ligand>
        <name>L-aspartate</name>
        <dbReference type="ChEBI" id="CHEBI:29991"/>
    </ligand>
</feature>
<feature type="binding site" evidence="1">
    <location>
        <position position="141"/>
    </location>
    <ligand>
        <name>carbamoyl phosphate</name>
        <dbReference type="ChEBI" id="CHEBI:58228"/>
    </ligand>
</feature>
<feature type="binding site" evidence="1">
    <location>
        <position position="171"/>
    </location>
    <ligand>
        <name>carbamoyl phosphate</name>
        <dbReference type="ChEBI" id="CHEBI:58228"/>
    </ligand>
</feature>
<feature type="binding site" evidence="1">
    <location>
        <position position="174"/>
    </location>
    <ligand>
        <name>carbamoyl phosphate</name>
        <dbReference type="ChEBI" id="CHEBI:58228"/>
    </ligand>
</feature>
<feature type="binding site" evidence="1">
    <location>
        <position position="204"/>
    </location>
    <ligand>
        <name>L-aspartate</name>
        <dbReference type="ChEBI" id="CHEBI:29991"/>
    </ligand>
</feature>
<feature type="binding site" evidence="1">
    <location>
        <position position="259"/>
    </location>
    <ligand>
        <name>L-aspartate</name>
        <dbReference type="ChEBI" id="CHEBI:29991"/>
    </ligand>
</feature>
<feature type="binding site" evidence="1">
    <location>
        <position position="300"/>
    </location>
    <ligand>
        <name>carbamoyl phosphate</name>
        <dbReference type="ChEBI" id="CHEBI:58228"/>
    </ligand>
</feature>
<feature type="binding site" evidence="1">
    <location>
        <position position="301"/>
    </location>
    <ligand>
        <name>carbamoyl phosphate</name>
        <dbReference type="ChEBI" id="CHEBI:58228"/>
    </ligand>
</feature>
<evidence type="ECO:0000255" key="1">
    <source>
        <dbReference type="HAMAP-Rule" id="MF_00001"/>
    </source>
</evidence>
<name>PYRB_BURMA</name>
<reference key="1">
    <citation type="journal article" date="2004" name="Proc. Natl. Acad. Sci. U.S.A.">
        <title>Structural flexibility in the Burkholderia mallei genome.</title>
        <authorList>
            <person name="Nierman W.C."/>
            <person name="DeShazer D."/>
            <person name="Kim H.S."/>
            <person name="Tettelin H."/>
            <person name="Nelson K.E."/>
            <person name="Feldblyum T.V."/>
            <person name="Ulrich R.L."/>
            <person name="Ronning C.M."/>
            <person name="Brinkac L.M."/>
            <person name="Daugherty S.C."/>
            <person name="Davidsen T.D."/>
            <person name="DeBoy R.T."/>
            <person name="Dimitrov G."/>
            <person name="Dodson R.J."/>
            <person name="Durkin A.S."/>
            <person name="Gwinn M.L."/>
            <person name="Haft D.H."/>
            <person name="Khouri H.M."/>
            <person name="Kolonay J.F."/>
            <person name="Madupu R."/>
            <person name="Mohammoud Y."/>
            <person name="Nelson W.C."/>
            <person name="Radune D."/>
            <person name="Romero C.M."/>
            <person name="Sarria S."/>
            <person name="Selengut J."/>
            <person name="Shamblin C."/>
            <person name="Sullivan S.A."/>
            <person name="White O."/>
            <person name="Yu Y."/>
            <person name="Zafar N."/>
            <person name="Zhou L."/>
            <person name="Fraser C.M."/>
        </authorList>
    </citation>
    <scope>NUCLEOTIDE SEQUENCE [LARGE SCALE GENOMIC DNA]</scope>
    <source>
        <strain>ATCC 23344</strain>
    </source>
</reference>
<accession>Q62I89</accession>
<comment type="function">
    <text evidence="1">Catalyzes the condensation of carbamoyl phosphate and aspartate to form carbamoyl aspartate and inorganic phosphate, the committed step in the de novo pyrimidine nucleotide biosynthesis pathway.</text>
</comment>
<comment type="catalytic activity">
    <reaction evidence="1">
        <text>carbamoyl phosphate + L-aspartate = N-carbamoyl-L-aspartate + phosphate + H(+)</text>
        <dbReference type="Rhea" id="RHEA:20013"/>
        <dbReference type="ChEBI" id="CHEBI:15378"/>
        <dbReference type="ChEBI" id="CHEBI:29991"/>
        <dbReference type="ChEBI" id="CHEBI:32814"/>
        <dbReference type="ChEBI" id="CHEBI:43474"/>
        <dbReference type="ChEBI" id="CHEBI:58228"/>
        <dbReference type="EC" id="2.1.3.2"/>
    </reaction>
</comment>
<comment type="pathway">
    <text evidence="1">Pyrimidine metabolism; UMP biosynthesis via de novo pathway; (S)-dihydroorotate from bicarbonate: step 2/3.</text>
</comment>
<comment type="subunit">
    <text evidence="1">Heterododecamer (2C3:3R2) of six catalytic PyrB chains organized as two trimers (C3), and six regulatory PyrI chains organized as three dimers (R2).</text>
</comment>
<comment type="similarity">
    <text evidence="1">Belongs to the aspartate/ornithine carbamoyltransferase superfamily. ATCase family.</text>
</comment>
<dbReference type="EC" id="2.1.3.2" evidence="1"/>
<dbReference type="EMBL" id="CP000010">
    <property type="protein sequence ID" value="AAU49994.1"/>
    <property type="molecule type" value="Genomic_DNA"/>
</dbReference>
<dbReference type="RefSeq" id="WP_004534003.1">
    <property type="nucleotide sequence ID" value="NC_006348.1"/>
</dbReference>
<dbReference type="RefSeq" id="YP_103581.1">
    <property type="nucleotide sequence ID" value="NC_006348.1"/>
</dbReference>
<dbReference type="SMR" id="Q62I89"/>
<dbReference type="KEGG" id="bma:BMA1994"/>
<dbReference type="PATRIC" id="fig|243160.12.peg.2061"/>
<dbReference type="eggNOG" id="COG0540">
    <property type="taxonomic scope" value="Bacteria"/>
</dbReference>
<dbReference type="HOGENOM" id="CLU_043846_2_0_4"/>
<dbReference type="UniPathway" id="UPA00070">
    <property type="reaction ID" value="UER00116"/>
</dbReference>
<dbReference type="Proteomes" id="UP000006693">
    <property type="component" value="Chromosome 1"/>
</dbReference>
<dbReference type="GO" id="GO:0005829">
    <property type="term" value="C:cytosol"/>
    <property type="evidence" value="ECO:0007669"/>
    <property type="project" value="TreeGrafter"/>
</dbReference>
<dbReference type="GO" id="GO:0016597">
    <property type="term" value="F:amino acid binding"/>
    <property type="evidence" value="ECO:0007669"/>
    <property type="project" value="InterPro"/>
</dbReference>
<dbReference type="GO" id="GO:0004070">
    <property type="term" value="F:aspartate carbamoyltransferase activity"/>
    <property type="evidence" value="ECO:0007669"/>
    <property type="project" value="UniProtKB-UniRule"/>
</dbReference>
<dbReference type="GO" id="GO:0006207">
    <property type="term" value="P:'de novo' pyrimidine nucleobase biosynthetic process"/>
    <property type="evidence" value="ECO:0007669"/>
    <property type="project" value="InterPro"/>
</dbReference>
<dbReference type="GO" id="GO:0044205">
    <property type="term" value="P:'de novo' UMP biosynthetic process"/>
    <property type="evidence" value="ECO:0007669"/>
    <property type="project" value="UniProtKB-UniRule"/>
</dbReference>
<dbReference type="GO" id="GO:0006520">
    <property type="term" value="P:amino acid metabolic process"/>
    <property type="evidence" value="ECO:0007669"/>
    <property type="project" value="InterPro"/>
</dbReference>
<dbReference type="FunFam" id="3.40.50.1370:FF:000007">
    <property type="entry name" value="Aspartate carbamoyltransferase"/>
    <property type="match status" value="1"/>
</dbReference>
<dbReference type="Gene3D" id="3.40.50.1370">
    <property type="entry name" value="Aspartate/ornithine carbamoyltransferase"/>
    <property type="match status" value="2"/>
</dbReference>
<dbReference type="HAMAP" id="MF_00001">
    <property type="entry name" value="Asp_carb_tr"/>
    <property type="match status" value="1"/>
</dbReference>
<dbReference type="InterPro" id="IPR006132">
    <property type="entry name" value="Asp/Orn_carbamoyltranf_P-bd"/>
</dbReference>
<dbReference type="InterPro" id="IPR006130">
    <property type="entry name" value="Asp/Orn_carbamoylTrfase"/>
</dbReference>
<dbReference type="InterPro" id="IPR036901">
    <property type="entry name" value="Asp/Orn_carbamoylTrfase_sf"/>
</dbReference>
<dbReference type="InterPro" id="IPR002082">
    <property type="entry name" value="Asp_carbamoyltransf"/>
</dbReference>
<dbReference type="InterPro" id="IPR006131">
    <property type="entry name" value="Asp_carbamoyltransf_Asp/Orn-bd"/>
</dbReference>
<dbReference type="NCBIfam" id="TIGR00670">
    <property type="entry name" value="asp_carb_tr"/>
    <property type="match status" value="1"/>
</dbReference>
<dbReference type="NCBIfam" id="NF002032">
    <property type="entry name" value="PRK00856.1"/>
    <property type="match status" value="1"/>
</dbReference>
<dbReference type="PANTHER" id="PTHR45753:SF6">
    <property type="entry name" value="ASPARTATE CARBAMOYLTRANSFERASE"/>
    <property type="match status" value="1"/>
</dbReference>
<dbReference type="PANTHER" id="PTHR45753">
    <property type="entry name" value="ORNITHINE CARBAMOYLTRANSFERASE, MITOCHONDRIAL"/>
    <property type="match status" value="1"/>
</dbReference>
<dbReference type="Pfam" id="PF00185">
    <property type="entry name" value="OTCace"/>
    <property type="match status" value="1"/>
</dbReference>
<dbReference type="Pfam" id="PF02729">
    <property type="entry name" value="OTCace_N"/>
    <property type="match status" value="1"/>
</dbReference>
<dbReference type="PRINTS" id="PR00100">
    <property type="entry name" value="AOTCASE"/>
</dbReference>
<dbReference type="PRINTS" id="PR00101">
    <property type="entry name" value="ATCASE"/>
</dbReference>
<dbReference type="SUPFAM" id="SSF53671">
    <property type="entry name" value="Aspartate/ornithine carbamoyltransferase"/>
    <property type="match status" value="1"/>
</dbReference>
<dbReference type="PROSITE" id="PS00097">
    <property type="entry name" value="CARBAMOYLTRANSFERASE"/>
    <property type="match status" value="1"/>
</dbReference>
<sequence>MTTDTSGRTGNPAAAAPAERFRYGFLKGNPQLTKNGELKHLLTIEGLPRAILNQILDTAEQFVSVTDREVKKVPLLRGKSVFNLFFENSTRTRTTFEIAAKRLSADVINLNINASSTSKGESLLDTINNLSAMHADLFVVRHASSGAPYLIAEHCAPHVHVINAGDGRHAHPTQGLLDMYTIRHYKRDFTKLRVAIVGDILHSRVARSDIHALTTLGVPEVRAIGPRTLLPGGLEQMGVRVFHNLDEGLRDVDVIIMLRLQNERMSGALLPSAQEYFKSWGLTPERLALAAPDAIVMHPGPMNRGVEIDSQVADGPQSVILNQVTFGIAVRMAVMGIVAGTSD</sequence>
<gene>
    <name evidence="1" type="primary">pyrB</name>
    <name type="ordered locus">BMA1994</name>
</gene>
<organism>
    <name type="scientific">Burkholderia mallei (strain ATCC 23344)</name>
    <dbReference type="NCBI Taxonomy" id="243160"/>
    <lineage>
        <taxon>Bacteria</taxon>
        <taxon>Pseudomonadati</taxon>
        <taxon>Pseudomonadota</taxon>
        <taxon>Betaproteobacteria</taxon>
        <taxon>Burkholderiales</taxon>
        <taxon>Burkholderiaceae</taxon>
        <taxon>Burkholderia</taxon>
        <taxon>pseudomallei group</taxon>
    </lineage>
</organism>
<keyword id="KW-0665">Pyrimidine biosynthesis</keyword>
<keyword id="KW-1185">Reference proteome</keyword>
<keyword id="KW-0808">Transferase</keyword>
<proteinExistence type="inferred from homology"/>